<dbReference type="EMBL" id="CP000918">
    <property type="protein sequence ID" value="ACO15954.1"/>
    <property type="molecule type" value="Genomic_DNA"/>
</dbReference>
<dbReference type="RefSeq" id="WP_000507059.1">
    <property type="nucleotide sequence ID" value="NC_012468.1"/>
</dbReference>
<dbReference type="SMR" id="C1CAJ9"/>
<dbReference type="KEGG" id="snm:SP70585_0252"/>
<dbReference type="HOGENOM" id="CLU_162466_0_0_9"/>
<dbReference type="Proteomes" id="UP000002211">
    <property type="component" value="Chromosome"/>
</dbReference>
<dbReference type="HAMAP" id="MF_01507">
    <property type="entry name" value="UPF0297"/>
    <property type="match status" value="1"/>
</dbReference>
<dbReference type="InterPro" id="IPR009309">
    <property type="entry name" value="IreB"/>
</dbReference>
<dbReference type="NCBIfam" id="NF003997">
    <property type="entry name" value="PRK05473.1"/>
    <property type="match status" value="1"/>
</dbReference>
<dbReference type="PANTHER" id="PTHR40067">
    <property type="entry name" value="UPF0297 PROTEIN YRZL"/>
    <property type="match status" value="1"/>
</dbReference>
<dbReference type="PANTHER" id="PTHR40067:SF1">
    <property type="entry name" value="UPF0297 PROTEIN YRZL"/>
    <property type="match status" value="1"/>
</dbReference>
<dbReference type="Pfam" id="PF06135">
    <property type="entry name" value="IreB"/>
    <property type="match status" value="1"/>
</dbReference>
<dbReference type="PIRSF" id="PIRSF037258">
    <property type="entry name" value="DUF965_bac"/>
    <property type="match status" value="1"/>
</dbReference>
<protein>
    <recommendedName>
        <fullName evidence="1">UPF0297 protein SP70585_0252</fullName>
    </recommendedName>
</protein>
<sequence length="88" mass="10227">MGFTEETVRFKLDDSNKKEISETLTDVYASLNDKGYNPINQIVGYVLSGDPAYVPRYNNARNQIRKYERDEIVEELVRYYLKGQGVDL</sequence>
<gene>
    <name type="ordered locus">SP70585_0252</name>
</gene>
<reference key="1">
    <citation type="journal article" date="2010" name="Genome Biol.">
        <title>Structure and dynamics of the pan-genome of Streptococcus pneumoniae and closely related species.</title>
        <authorList>
            <person name="Donati C."/>
            <person name="Hiller N.L."/>
            <person name="Tettelin H."/>
            <person name="Muzzi A."/>
            <person name="Croucher N.J."/>
            <person name="Angiuoli S.V."/>
            <person name="Oggioni M."/>
            <person name="Dunning Hotopp J.C."/>
            <person name="Hu F.Z."/>
            <person name="Riley D.R."/>
            <person name="Covacci A."/>
            <person name="Mitchell T.J."/>
            <person name="Bentley S.D."/>
            <person name="Kilian M."/>
            <person name="Ehrlich G.D."/>
            <person name="Rappuoli R."/>
            <person name="Moxon E.R."/>
            <person name="Masignani V."/>
        </authorList>
    </citation>
    <scope>NUCLEOTIDE SEQUENCE [LARGE SCALE GENOMIC DNA]</scope>
    <source>
        <strain>70585</strain>
    </source>
</reference>
<organism>
    <name type="scientific">Streptococcus pneumoniae (strain 70585)</name>
    <dbReference type="NCBI Taxonomy" id="488221"/>
    <lineage>
        <taxon>Bacteria</taxon>
        <taxon>Bacillati</taxon>
        <taxon>Bacillota</taxon>
        <taxon>Bacilli</taxon>
        <taxon>Lactobacillales</taxon>
        <taxon>Streptococcaceae</taxon>
        <taxon>Streptococcus</taxon>
    </lineage>
</organism>
<evidence type="ECO:0000255" key="1">
    <source>
        <dbReference type="HAMAP-Rule" id="MF_01507"/>
    </source>
</evidence>
<name>Y252_STRP7</name>
<proteinExistence type="inferred from homology"/>
<feature type="chain" id="PRO_1000185046" description="UPF0297 protein SP70585_0252">
    <location>
        <begin position="1"/>
        <end position="88"/>
    </location>
</feature>
<accession>C1CAJ9</accession>
<comment type="similarity">
    <text evidence="1">Belongs to the UPF0297 family.</text>
</comment>